<keyword id="KW-0030">Aminoacyl-tRNA synthetase</keyword>
<keyword id="KW-0067">ATP-binding</keyword>
<keyword id="KW-0963">Cytoplasm</keyword>
<keyword id="KW-0436">Ligase</keyword>
<keyword id="KW-0479">Metal-binding</keyword>
<keyword id="KW-0547">Nucleotide-binding</keyword>
<keyword id="KW-0648">Protein biosynthesis</keyword>
<keyword id="KW-0694">RNA-binding</keyword>
<keyword id="KW-0820">tRNA-binding</keyword>
<keyword id="KW-0862">Zinc</keyword>
<dbReference type="EC" id="6.1.1.7" evidence="1"/>
<dbReference type="EMBL" id="AE006914">
    <property type="protein sequence ID" value="AAL03865.1"/>
    <property type="molecule type" value="Genomic_DNA"/>
</dbReference>
<dbReference type="PIR" id="G97865">
    <property type="entry name" value="G97865"/>
</dbReference>
<dbReference type="RefSeq" id="WP_010977882.1">
    <property type="nucleotide sequence ID" value="NC_003103.1"/>
</dbReference>
<dbReference type="SMR" id="Q92G00"/>
<dbReference type="GeneID" id="928521"/>
<dbReference type="KEGG" id="rco:RC1327"/>
<dbReference type="PATRIC" id="fig|272944.4.peg.1521"/>
<dbReference type="HOGENOM" id="CLU_004485_1_1_5"/>
<dbReference type="Proteomes" id="UP000000816">
    <property type="component" value="Chromosome"/>
</dbReference>
<dbReference type="GO" id="GO:0005829">
    <property type="term" value="C:cytosol"/>
    <property type="evidence" value="ECO:0007669"/>
    <property type="project" value="TreeGrafter"/>
</dbReference>
<dbReference type="GO" id="GO:0004813">
    <property type="term" value="F:alanine-tRNA ligase activity"/>
    <property type="evidence" value="ECO:0007669"/>
    <property type="project" value="UniProtKB-UniRule"/>
</dbReference>
<dbReference type="GO" id="GO:0002161">
    <property type="term" value="F:aminoacyl-tRNA deacylase activity"/>
    <property type="evidence" value="ECO:0007669"/>
    <property type="project" value="TreeGrafter"/>
</dbReference>
<dbReference type="GO" id="GO:0005524">
    <property type="term" value="F:ATP binding"/>
    <property type="evidence" value="ECO:0007669"/>
    <property type="project" value="UniProtKB-UniRule"/>
</dbReference>
<dbReference type="GO" id="GO:0000049">
    <property type="term" value="F:tRNA binding"/>
    <property type="evidence" value="ECO:0007669"/>
    <property type="project" value="UniProtKB-KW"/>
</dbReference>
<dbReference type="GO" id="GO:0008270">
    <property type="term" value="F:zinc ion binding"/>
    <property type="evidence" value="ECO:0007669"/>
    <property type="project" value="UniProtKB-UniRule"/>
</dbReference>
<dbReference type="GO" id="GO:0006419">
    <property type="term" value="P:alanyl-tRNA aminoacylation"/>
    <property type="evidence" value="ECO:0007669"/>
    <property type="project" value="UniProtKB-UniRule"/>
</dbReference>
<dbReference type="GO" id="GO:0045892">
    <property type="term" value="P:negative regulation of DNA-templated transcription"/>
    <property type="evidence" value="ECO:0007669"/>
    <property type="project" value="TreeGrafter"/>
</dbReference>
<dbReference type="CDD" id="cd00673">
    <property type="entry name" value="AlaRS_core"/>
    <property type="match status" value="1"/>
</dbReference>
<dbReference type="FunFam" id="3.10.310.40:FF:000001">
    <property type="entry name" value="Alanine--tRNA ligase"/>
    <property type="match status" value="1"/>
</dbReference>
<dbReference type="FunFam" id="3.30.54.20:FF:000001">
    <property type="entry name" value="Alanine--tRNA ligase"/>
    <property type="match status" value="1"/>
</dbReference>
<dbReference type="FunFam" id="3.30.930.10:FF:000004">
    <property type="entry name" value="Alanine--tRNA ligase"/>
    <property type="match status" value="1"/>
</dbReference>
<dbReference type="FunFam" id="3.30.980.10:FF:000004">
    <property type="entry name" value="Alanine--tRNA ligase, cytoplasmic"/>
    <property type="match status" value="1"/>
</dbReference>
<dbReference type="Gene3D" id="2.40.30.130">
    <property type="match status" value="1"/>
</dbReference>
<dbReference type="Gene3D" id="3.10.310.40">
    <property type="match status" value="1"/>
</dbReference>
<dbReference type="Gene3D" id="3.30.54.20">
    <property type="match status" value="1"/>
</dbReference>
<dbReference type="Gene3D" id="3.30.930.10">
    <property type="entry name" value="Bira Bifunctional Protein, Domain 2"/>
    <property type="match status" value="1"/>
</dbReference>
<dbReference type="Gene3D" id="3.30.980.10">
    <property type="entry name" value="Threonyl-trna Synthetase, Chain A, domain 2"/>
    <property type="match status" value="1"/>
</dbReference>
<dbReference type="HAMAP" id="MF_00036_B">
    <property type="entry name" value="Ala_tRNA_synth_B"/>
    <property type="match status" value="1"/>
</dbReference>
<dbReference type="InterPro" id="IPR045864">
    <property type="entry name" value="aa-tRNA-synth_II/BPL/LPL"/>
</dbReference>
<dbReference type="InterPro" id="IPR002318">
    <property type="entry name" value="Ala-tRNA-lgiase_IIc"/>
</dbReference>
<dbReference type="InterPro" id="IPR018162">
    <property type="entry name" value="Ala-tRNA-ligase_IIc_anticod-bd"/>
</dbReference>
<dbReference type="InterPro" id="IPR018165">
    <property type="entry name" value="Ala-tRNA-synth_IIc_core"/>
</dbReference>
<dbReference type="InterPro" id="IPR018164">
    <property type="entry name" value="Ala-tRNA-synth_IIc_N"/>
</dbReference>
<dbReference type="InterPro" id="IPR050058">
    <property type="entry name" value="Ala-tRNA_ligase"/>
</dbReference>
<dbReference type="InterPro" id="IPR023033">
    <property type="entry name" value="Ala_tRNA_ligase_euk/bac"/>
</dbReference>
<dbReference type="InterPro" id="IPR003156">
    <property type="entry name" value="DHHA1_dom"/>
</dbReference>
<dbReference type="InterPro" id="IPR018163">
    <property type="entry name" value="Thr/Ala-tRNA-synth_IIc_edit"/>
</dbReference>
<dbReference type="InterPro" id="IPR009000">
    <property type="entry name" value="Transl_B-barrel_sf"/>
</dbReference>
<dbReference type="InterPro" id="IPR012947">
    <property type="entry name" value="tRNA_SAD"/>
</dbReference>
<dbReference type="NCBIfam" id="TIGR00344">
    <property type="entry name" value="alaS"/>
    <property type="match status" value="1"/>
</dbReference>
<dbReference type="PANTHER" id="PTHR11777:SF9">
    <property type="entry name" value="ALANINE--TRNA LIGASE, CYTOPLASMIC"/>
    <property type="match status" value="1"/>
</dbReference>
<dbReference type="PANTHER" id="PTHR11777">
    <property type="entry name" value="ALANYL-TRNA SYNTHETASE"/>
    <property type="match status" value="1"/>
</dbReference>
<dbReference type="Pfam" id="PF02272">
    <property type="entry name" value="DHHA1"/>
    <property type="match status" value="1"/>
</dbReference>
<dbReference type="Pfam" id="PF01411">
    <property type="entry name" value="tRNA-synt_2c"/>
    <property type="match status" value="1"/>
</dbReference>
<dbReference type="Pfam" id="PF07973">
    <property type="entry name" value="tRNA_SAD"/>
    <property type="match status" value="1"/>
</dbReference>
<dbReference type="PRINTS" id="PR00980">
    <property type="entry name" value="TRNASYNTHALA"/>
</dbReference>
<dbReference type="SMART" id="SM00863">
    <property type="entry name" value="tRNA_SAD"/>
    <property type="match status" value="1"/>
</dbReference>
<dbReference type="SUPFAM" id="SSF55681">
    <property type="entry name" value="Class II aaRS and biotin synthetases"/>
    <property type="match status" value="1"/>
</dbReference>
<dbReference type="SUPFAM" id="SSF101353">
    <property type="entry name" value="Putative anticodon-binding domain of alanyl-tRNA synthetase (AlaRS)"/>
    <property type="match status" value="1"/>
</dbReference>
<dbReference type="SUPFAM" id="SSF55186">
    <property type="entry name" value="ThrRS/AlaRS common domain"/>
    <property type="match status" value="1"/>
</dbReference>
<dbReference type="SUPFAM" id="SSF50447">
    <property type="entry name" value="Translation proteins"/>
    <property type="match status" value="1"/>
</dbReference>
<dbReference type="PROSITE" id="PS50860">
    <property type="entry name" value="AA_TRNA_LIGASE_II_ALA"/>
    <property type="match status" value="1"/>
</dbReference>
<evidence type="ECO:0000255" key="1">
    <source>
        <dbReference type="HAMAP-Rule" id="MF_00036"/>
    </source>
</evidence>
<protein>
    <recommendedName>
        <fullName evidence="1">Alanine--tRNA ligase</fullName>
        <ecNumber evidence="1">6.1.1.7</ecNumber>
    </recommendedName>
    <alternativeName>
        <fullName evidence="1">Alanyl-tRNA synthetase</fullName>
        <shortName evidence="1">AlaRS</shortName>
    </alternativeName>
</protein>
<accession>Q92G00</accession>
<comment type="function">
    <text evidence="1">Catalyzes the attachment of alanine to tRNA(Ala) in a two-step reaction: alanine is first activated by ATP to form Ala-AMP and then transferred to the acceptor end of tRNA(Ala). Also edits incorrectly charged Ser-tRNA(Ala) and Gly-tRNA(Ala) via its editing domain.</text>
</comment>
<comment type="catalytic activity">
    <reaction evidence="1">
        <text>tRNA(Ala) + L-alanine + ATP = L-alanyl-tRNA(Ala) + AMP + diphosphate</text>
        <dbReference type="Rhea" id="RHEA:12540"/>
        <dbReference type="Rhea" id="RHEA-COMP:9657"/>
        <dbReference type="Rhea" id="RHEA-COMP:9923"/>
        <dbReference type="ChEBI" id="CHEBI:30616"/>
        <dbReference type="ChEBI" id="CHEBI:33019"/>
        <dbReference type="ChEBI" id="CHEBI:57972"/>
        <dbReference type="ChEBI" id="CHEBI:78442"/>
        <dbReference type="ChEBI" id="CHEBI:78497"/>
        <dbReference type="ChEBI" id="CHEBI:456215"/>
        <dbReference type="EC" id="6.1.1.7"/>
    </reaction>
</comment>
<comment type="cofactor">
    <cofactor evidence="1">
        <name>Zn(2+)</name>
        <dbReference type="ChEBI" id="CHEBI:29105"/>
    </cofactor>
    <text evidence="1">Binds 1 zinc ion per subunit.</text>
</comment>
<comment type="subcellular location">
    <subcellularLocation>
        <location evidence="1">Cytoplasm</location>
    </subcellularLocation>
</comment>
<comment type="domain">
    <text evidence="1">Consists of three domains; the N-terminal catalytic domain, the editing domain and the C-terminal C-Ala domain. The editing domain removes incorrectly charged amino acids, while the C-Ala domain, along with tRNA(Ala), serves as a bridge to cooperatively bring together the editing and aminoacylation centers thus stimulating deacylation of misacylated tRNAs.</text>
</comment>
<comment type="similarity">
    <text evidence="1">Belongs to the class-II aminoacyl-tRNA synthetase family.</text>
</comment>
<name>SYA_RICCN</name>
<feature type="chain" id="PRO_0000075190" description="Alanine--tRNA ligase">
    <location>
        <begin position="1"/>
        <end position="878"/>
    </location>
</feature>
<feature type="binding site" evidence="1">
    <location>
        <position position="567"/>
    </location>
    <ligand>
        <name>Zn(2+)</name>
        <dbReference type="ChEBI" id="CHEBI:29105"/>
    </ligand>
</feature>
<feature type="binding site" evidence="1">
    <location>
        <position position="571"/>
    </location>
    <ligand>
        <name>Zn(2+)</name>
        <dbReference type="ChEBI" id="CHEBI:29105"/>
    </ligand>
</feature>
<feature type="binding site" evidence="1">
    <location>
        <position position="669"/>
    </location>
    <ligand>
        <name>Zn(2+)</name>
        <dbReference type="ChEBI" id="CHEBI:29105"/>
    </ligand>
</feature>
<feature type="binding site" evidence="1">
    <location>
        <position position="673"/>
    </location>
    <ligand>
        <name>Zn(2+)</name>
        <dbReference type="ChEBI" id="CHEBI:29105"/>
    </ligand>
</feature>
<organism>
    <name type="scientific">Rickettsia conorii (strain ATCC VR-613 / Malish 7)</name>
    <dbReference type="NCBI Taxonomy" id="272944"/>
    <lineage>
        <taxon>Bacteria</taxon>
        <taxon>Pseudomonadati</taxon>
        <taxon>Pseudomonadota</taxon>
        <taxon>Alphaproteobacteria</taxon>
        <taxon>Rickettsiales</taxon>
        <taxon>Rickettsiaceae</taxon>
        <taxon>Rickettsieae</taxon>
        <taxon>Rickettsia</taxon>
        <taxon>spotted fever group</taxon>
    </lineage>
</organism>
<reference key="1">
    <citation type="journal article" date="2001" name="Science">
        <title>Mechanisms of evolution in Rickettsia conorii and R. prowazekii.</title>
        <authorList>
            <person name="Ogata H."/>
            <person name="Audic S."/>
            <person name="Renesto-Audiffren P."/>
            <person name="Fournier P.-E."/>
            <person name="Barbe V."/>
            <person name="Samson D."/>
            <person name="Roux V."/>
            <person name="Cossart P."/>
            <person name="Weissenbach J."/>
            <person name="Claverie J.-M."/>
            <person name="Raoult D."/>
        </authorList>
    </citation>
    <scope>NUCLEOTIDE SEQUENCE [LARGE SCALE GENOMIC DNA]</scope>
    <source>
        <strain>ATCC VR-613 / Malish 7</strain>
    </source>
</reference>
<proteinExistence type="inferred from homology"/>
<sequence>MTKFTTEEVRSKFITYFKANNHTHVPASSLIPHNDPSLMFVNSGMVQFKNVFTGQGKRPYNKAVTSQKSLRAGGKHNDLENVGYTARHHTFFEMLGNFSFGDYFKEQAIYYAWNLLTKEFELPKDKLYATIYHTDDEAAAYWKKIAGFGDDRIIKIKTNDNFWSMGDTGPCGPCSEIFYDHGEQIYGGLPGTKDEDGDRFIEIWNMVFMQYEQIDKDTSIELSQKSIDTGMGLERMTAVLQHVNNNYDIDLFQEIINFTENIVKVKVEGEAKFSYRVIADHLRASSFLIADGVIPSNEGRGYVLRRIMRRSMRHAHMLGSKEPLMYKLLPKLVDLMGNVYPELKRAESFISSILEQEEIRFKATLERGLKLLTEETETLTKGNELSGEVAFKLYDTYGFPLDLTEDILKNRDIAVDHKGFEEQMLMQKARARKSWLGSGESKTDQLWFDIKEQHGSTEFLGYTLNEAKCKIIALIKNNNLVNDIKEIDTQFLLISNQTPFYGESGGQIGDIGTIFAKDSEVEVIDTLKYLGSIIIHKCILKKGQINVGENANFSIDIRYRQNLRIHHSATHILHAVLHEVLGKHVTQKGSLVAPTYLRFDISHSKAVTNEEITLIEDKVNEIIRDNHEVTTTLMATEDAIKQGAMALFGEKYDSEVRVVKMGETSLELCGGTHVRRTGDIGCFKITSESAIAAGVRRIEAVCGEFVITLMREKDSLLKSIESSFKTNKNELITKVNNILERNKEVEKELEKTLLASLDLSIEQIEKQSAQITGIKLLYKKVGNIDNKILRQAAENLTKKVEDLIMVYIAEGIGKLSITVAVSKAITDKYNADIIAKKLSLFLGGSGGGGQASLAQAGGNDIGKLTNIHEKLYSLLTVS</sequence>
<gene>
    <name evidence="1" type="primary">alaS</name>
    <name type="ordered locus">RC1327</name>
</gene>